<dbReference type="EMBL" id="AF273733">
    <property type="protein sequence ID" value="AAG21336.2"/>
    <property type="molecule type" value="mRNA"/>
</dbReference>
<dbReference type="GO" id="GO:0005789">
    <property type="term" value="C:endoplasmic reticulum membrane"/>
    <property type="evidence" value="ECO:0007669"/>
    <property type="project" value="TreeGrafter"/>
</dbReference>
<dbReference type="GO" id="GO:0004791">
    <property type="term" value="F:thioredoxin-disulfide reductase (NADPH) activity"/>
    <property type="evidence" value="ECO:0007669"/>
    <property type="project" value="TreeGrafter"/>
</dbReference>
<dbReference type="GO" id="GO:0045454">
    <property type="term" value="P:cell redox homeostasis"/>
    <property type="evidence" value="ECO:0007669"/>
    <property type="project" value="TreeGrafter"/>
</dbReference>
<dbReference type="Gene3D" id="3.40.30.10">
    <property type="entry name" value="Glutaredoxin"/>
    <property type="match status" value="1"/>
</dbReference>
<dbReference type="InterPro" id="IPR011893">
    <property type="entry name" value="Selenoprotein_Rdx-typ"/>
</dbReference>
<dbReference type="InterPro" id="IPR019389">
    <property type="entry name" value="Selenoprotein_T"/>
</dbReference>
<dbReference type="InterPro" id="IPR036249">
    <property type="entry name" value="Thioredoxin-like_sf"/>
</dbReference>
<dbReference type="NCBIfam" id="TIGR02174">
    <property type="entry name" value="CXXU_selWTH"/>
    <property type="match status" value="1"/>
</dbReference>
<dbReference type="PANTHER" id="PTHR13544">
    <property type="entry name" value="SELENOPROTEIN T"/>
    <property type="match status" value="1"/>
</dbReference>
<dbReference type="PANTHER" id="PTHR13544:SF0">
    <property type="entry name" value="THIOREDOXIN REDUCTASE-LIKE SELENOPROTEIN T"/>
    <property type="match status" value="1"/>
</dbReference>
<dbReference type="Pfam" id="PF10262">
    <property type="entry name" value="Rdx"/>
    <property type="match status" value="1"/>
</dbReference>
<dbReference type="SUPFAM" id="SSF52833">
    <property type="entry name" value="Thioredoxin-like"/>
    <property type="match status" value="1"/>
</dbReference>
<accession>Q9BN19</accession>
<feature type="signal peptide" evidence="1">
    <location>
        <begin position="1"/>
        <end position="22"/>
    </location>
</feature>
<feature type="chain" id="PRO_0000032296" description="Putative esophageal gland cell secretory protein 6">
    <location>
        <begin position="23"/>
        <end position="244"/>
    </location>
</feature>
<feature type="disulfide bond" description="Redox-active" evidence="1">
    <location>
        <begin position="88"/>
        <end position="91"/>
    </location>
</feature>
<comment type="similarity">
    <text evidence="2">Belongs to the SelWTH family. SELT subfamily.</text>
</comment>
<organism>
    <name type="scientific">Heterodera glycines</name>
    <name type="common">Soybean cyst nematode worm</name>
    <dbReference type="NCBI Taxonomy" id="51029"/>
    <lineage>
        <taxon>Eukaryota</taxon>
        <taxon>Metazoa</taxon>
        <taxon>Ecdysozoa</taxon>
        <taxon>Nematoda</taxon>
        <taxon>Chromadorea</taxon>
        <taxon>Rhabditida</taxon>
        <taxon>Tylenchina</taxon>
        <taxon>Tylenchomorpha</taxon>
        <taxon>Tylenchoidea</taxon>
        <taxon>Heteroderidae</taxon>
        <taxon>Heteroderinae</taxon>
        <taxon>Heterodera</taxon>
    </lineage>
</organism>
<reference key="1">
    <citation type="journal article" date="2001" name="Mol. Plant Microbe Interact.">
        <title>Signal peptide-selection of cDNA cloned directly from the esophageal gland cells of the soybean cyst nematode Heterodera glycines.</title>
        <authorList>
            <person name="Wang X."/>
            <person name="Allen R."/>
            <person name="Ding X."/>
            <person name="Goellner M."/>
            <person name="Maier T."/>
            <person name="de Boer J.M."/>
            <person name="Baum T.J."/>
            <person name="Hussey R.S."/>
            <person name="Davis E.L."/>
        </authorList>
    </citation>
    <scope>NUCLEOTIDE SEQUENCE [MRNA]</scope>
</reference>
<proteinExistence type="evidence at transcript level"/>
<evidence type="ECO:0000255" key="1"/>
<evidence type="ECO:0000305" key="2"/>
<protein>
    <recommendedName>
        <fullName>Putative esophageal gland cell secretory protein 6</fullName>
    </recommendedName>
</protein>
<name>HSP6_HETGL</name>
<keyword id="KW-1015">Disulfide bond</keyword>
<keyword id="KW-0676">Redox-active center</keyword>
<keyword id="KW-0732">Signal</keyword>
<sequence>MDRRFTVFLVIALVTSIYEVLSNGNLNDGDDSFKQFDELEENPAHKYSKEAQKGFEMEEEEVTIREPSGTKESFKLPINMPPVKFSFCVSCGYRQAYEQFAQILREKYPGIDIHGENYPPGILRTVGAQVIGMVKIALIVCVVSGRSPFPTLGLETPTFFQWMLSNRLSAALMLFLFSNAIEGMLQSTGAFEIYIESERIWSKLESGRVPSPPELFQAIDSHLAIRRGGAGRFGSSSSFGIDGS</sequence>
<gene>
    <name type="primary">HSP6</name>
</gene>